<gene>
    <name evidence="1" type="primary">ccmE</name>
    <name evidence="1" type="synonym">cycJ</name>
    <name type="ordered locus">Pnec_1379</name>
</gene>
<protein>
    <recommendedName>
        <fullName evidence="1">Cytochrome c-type biogenesis protein CcmE</fullName>
    </recommendedName>
    <alternativeName>
        <fullName evidence="1">Cytochrome c maturation protein E</fullName>
    </alternativeName>
    <alternativeName>
        <fullName evidence="1">Heme chaperone CcmE</fullName>
    </alternativeName>
</protein>
<reference key="1">
    <citation type="journal article" date="2013" name="Proc. Natl. Acad. Sci. U.S.A.">
        <title>Polynucleobacter necessarius, a model for genome reduction in both free-living and symbiotic bacteria.</title>
        <authorList>
            <person name="Boscaro V."/>
            <person name="Felletti M."/>
            <person name="Vannini C."/>
            <person name="Ackerman M.S."/>
            <person name="Chain P.S."/>
            <person name="Malfatti S."/>
            <person name="Vergez L.M."/>
            <person name="Shin M."/>
            <person name="Doak T.G."/>
            <person name="Lynch M."/>
            <person name="Petroni G."/>
        </authorList>
    </citation>
    <scope>NUCLEOTIDE SEQUENCE [LARGE SCALE GENOMIC DNA]</scope>
    <source>
        <strain>STIR1</strain>
    </source>
</reference>
<sequence length="144" mass="15293">MKPRHKRALIIIAALIAIGVAALLILNALNSNIALYVTPSEVAAGKAPQGQAFRIGGMVKDGSLKRDGLTVHFVITDLAKDIPVAYIGILPDLFKEGKGAVIQGRMNANGEFIASEVLAKHDENYMPPEAKHALDQAQKNGSAK</sequence>
<comment type="function">
    <text evidence="1">Heme chaperone required for the biogenesis of c-type cytochromes. Transiently binds heme delivered by CcmC and transfers the heme to apo-cytochromes in a process facilitated by CcmF and CcmH.</text>
</comment>
<comment type="subcellular location">
    <subcellularLocation>
        <location evidence="1">Cell inner membrane</location>
        <topology evidence="1">Single-pass type II membrane protein</topology>
        <orientation evidence="1">Periplasmic side</orientation>
    </subcellularLocation>
</comment>
<comment type="similarity">
    <text evidence="1">Belongs to the CcmE/CycJ family.</text>
</comment>
<evidence type="ECO:0000255" key="1">
    <source>
        <dbReference type="HAMAP-Rule" id="MF_01959"/>
    </source>
</evidence>
<organism>
    <name type="scientific">Polynucleobacter necessarius subsp. necessarius (strain STIR1)</name>
    <dbReference type="NCBI Taxonomy" id="452638"/>
    <lineage>
        <taxon>Bacteria</taxon>
        <taxon>Pseudomonadati</taxon>
        <taxon>Pseudomonadota</taxon>
        <taxon>Betaproteobacteria</taxon>
        <taxon>Burkholderiales</taxon>
        <taxon>Burkholderiaceae</taxon>
        <taxon>Polynucleobacter</taxon>
    </lineage>
</organism>
<accession>B1XVV8</accession>
<feature type="chain" id="PRO_1000189040" description="Cytochrome c-type biogenesis protein CcmE">
    <location>
        <begin position="1"/>
        <end position="144"/>
    </location>
</feature>
<feature type="topological domain" description="Cytoplasmic" evidence="1">
    <location>
        <begin position="1"/>
        <end position="7"/>
    </location>
</feature>
<feature type="transmembrane region" description="Helical; Signal-anchor for type II membrane protein" evidence="1">
    <location>
        <begin position="8"/>
        <end position="28"/>
    </location>
</feature>
<feature type="topological domain" description="Periplasmic" evidence="1">
    <location>
        <begin position="29"/>
        <end position="144"/>
    </location>
</feature>
<feature type="binding site" description="covalent" evidence="1">
    <location>
        <position position="121"/>
    </location>
    <ligand>
        <name>heme</name>
        <dbReference type="ChEBI" id="CHEBI:30413"/>
    </ligand>
</feature>
<feature type="binding site" description="axial binding residue" evidence="1">
    <location>
        <position position="125"/>
    </location>
    <ligand>
        <name>heme</name>
        <dbReference type="ChEBI" id="CHEBI:30413"/>
    </ligand>
    <ligandPart>
        <name>Fe</name>
        <dbReference type="ChEBI" id="CHEBI:18248"/>
    </ligandPart>
</feature>
<dbReference type="EMBL" id="CP001010">
    <property type="protein sequence ID" value="ACB44485.1"/>
    <property type="molecule type" value="Genomic_DNA"/>
</dbReference>
<dbReference type="SMR" id="B1XVV8"/>
<dbReference type="STRING" id="452638.Pnec_1379"/>
<dbReference type="KEGG" id="pne:Pnec_1379"/>
<dbReference type="eggNOG" id="COG2332">
    <property type="taxonomic scope" value="Bacteria"/>
</dbReference>
<dbReference type="HOGENOM" id="CLU_079503_1_1_4"/>
<dbReference type="OrthoDB" id="9793584at2"/>
<dbReference type="GO" id="GO:0005886">
    <property type="term" value="C:plasma membrane"/>
    <property type="evidence" value="ECO:0007669"/>
    <property type="project" value="UniProtKB-SubCell"/>
</dbReference>
<dbReference type="GO" id="GO:0020037">
    <property type="term" value="F:heme binding"/>
    <property type="evidence" value="ECO:0007669"/>
    <property type="project" value="InterPro"/>
</dbReference>
<dbReference type="GO" id="GO:0046872">
    <property type="term" value="F:metal ion binding"/>
    <property type="evidence" value="ECO:0007669"/>
    <property type="project" value="UniProtKB-KW"/>
</dbReference>
<dbReference type="GO" id="GO:0017004">
    <property type="term" value="P:cytochrome complex assembly"/>
    <property type="evidence" value="ECO:0007669"/>
    <property type="project" value="UniProtKB-KW"/>
</dbReference>
<dbReference type="FunFam" id="2.40.50.140:FF:000104">
    <property type="entry name" value="Cytochrome c-type biogenesis protein CcmE"/>
    <property type="match status" value="1"/>
</dbReference>
<dbReference type="Gene3D" id="2.40.50.140">
    <property type="entry name" value="Nucleic acid-binding proteins"/>
    <property type="match status" value="1"/>
</dbReference>
<dbReference type="HAMAP" id="MF_01959">
    <property type="entry name" value="CcmE"/>
    <property type="match status" value="1"/>
</dbReference>
<dbReference type="InterPro" id="IPR004329">
    <property type="entry name" value="CcmE"/>
</dbReference>
<dbReference type="InterPro" id="IPR036127">
    <property type="entry name" value="CcmE-like_sf"/>
</dbReference>
<dbReference type="InterPro" id="IPR012340">
    <property type="entry name" value="NA-bd_OB-fold"/>
</dbReference>
<dbReference type="NCBIfam" id="NF009727">
    <property type="entry name" value="PRK13254.1-1"/>
    <property type="match status" value="1"/>
</dbReference>
<dbReference type="NCBIfam" id="NF009729">
    <property type="entry name" value="PRK13254.1-3"/>
    <property type="match status" value="1"/>
</dbReference>
<dbReference type="NCBIfam" id="NF009731">
    <property type="entry name" value="PRK13254.1-5"/>
    <property type="match status" value="1"/>
</dbReference>
<dbReference type="PANTHER" id="PTHR34128">
    <property type="entry name" value="CYTOCHROME C-TYPE BIOGENESIS PROTEIN CCME HOMOLOG, MITOCHONDRIAL"/>
    <property type="match status" value="1"/>
</dbReference>
<dbReference type="PANTHER" id="PTHR34128:SF2">
    <property type="entry name" value="CYTOCHROME C-TYPE BIOGENESIS PROTEIN CCME HOMOLOG, MITOCHONDRIAL"/>
    <property type="match status" value="1"/>
</dbReference>
<dbReference type="Pfam" id="PF03100">
    <property type="entry name" value="CcmE"/>
    <property type="match status" value="1"/>
</dbReference>
<dbReference type="SUPFAM" id="SSF82093">
    <property type="entry name" value="Heme chaperone CcmE"/>
    <property type="match status" value="1"/>
</dbReference>
<name>CCME_POLNS</name>
<keyword id="KW-0997">Cell inner membrane</keyword>
<keyword id="KW-1003">Cell membrane</keyword>
<keyword id="KW-0201">Cytochrome c-type biogenesis</keyword>
<keyword id="KW-0349">Heme</keyword>
<keyword id="KW-0408">Iron</keyword>
<keyword id="KW-0472">Membrane</keyword>
<keyword id="KW-0479">Metal-binding</keyword>
<keyword id="KW-0735">Signal-anchor</keyword>
<keyword id="KW-0812">Transmembrane</keyword>
<keyword id="KW-1133">Transmembrane helix</keyword>
<proteinExistence type="inferred from homology"/>